<evidence type="ECO:0000255" key="1">
    <source>
        <dbReference type="HAMAP-Rule" id="MF_00161"/>
    </source>
</evidence>
<evidence type="ECO:0000305" key="2"/>
<name>LSPA_BIFLO</name>
<feature type="chain" id="PRO_0000289353" description="Lipoprotein signal peptidase">
    <location>
        <begin position="1"/>
        <end position="182"/>
    </location>
</feature>
<feature type="transmembrane region" description="Helical" evidence="1">
    <location>
        <begin position="12"/>
        <end position="32"/>
    </location>
</feature>
<feature type="transmembrane region" description="Helical" evidence="1">
    <location>
        <begin position="68"/>
        <end position="88"/>
    </location>
</feature>
<feature type="transmembrane region" description="Helical" evidence="1">
    <location>
        <begin position="91"/>
        <end position="111"/>
    </location>
</feature>
<feature type="transmembrane region" description="Helical" evidence="1">
    <location>
        <begin position="135"/>
        <end position="155"/>
    </location>
</feature>
<feature type="active site" evidence="1">
    <location>
        <position position="127"/>
    </location>
</feature>
<feature type="active site" evidence="1">
    <location>
        <position position="140"/>
    </location>
</feature>
<accession>Q8G7W3</accession>
<sequence>MTNQQGRLRTRVAVFACVAAAALIVDQLTKAWAMAALSNGQTIRVIPGLLSFTLVRNPGASLGMGSGATWVISLLAVVACVALAVAGVRTVSMKWSVAISFAFAGALGNLIDRVMYADGFLDGKVVDFLNYGWSVGNVADIYLVVAGVVLVILILMGEPFSHKDLIEQSDESLQSEPEADAK</sequence>
<reference key="1">
    <citation type="journal article" date="2002" name="Proc. Natl. Acad. Sci. U.S.A.">
        <title>The genome sequence of Bifidobacterium longum reflects its adaptation to the human gastrointestinal tract.</title>
        <authorList>
            <person name="Schell M.A."/>
            <person name="Karmirantzou M."/>
            <person name="Snel B."/>
            <person name="Vilanova D."/>
            <person name="Berger B."/>
            <person name="Pessi G."/>
            <person name="Zwahlen M.-C."/>
            <person name="Desiere F."/>
            <person name="Bork P."/>
            <person name="Delley M."/>
            <person name="Pridmore R.D."/>
            <person name="Arigoni F."/>
        </authorList>
    </citation>
    <scope>NUCLEOTIDE SEQUENCE [LARGE SCALE GENOMIC DNA]</scope>
    <source>
        <strain>NCC 2705</strain>
    </source>
</reference>
<protein>
    <recommendedName>
        <fullName evidence="1">Lipoprotein signal peptidase</fullName>
        <ecNumber evidence="1">3.4.23.36</ecNumber>
    </recommendedName>
    <alternativeName>
        <fullName evidence="1">Prolipoprotein signal peptidase</fullName>
    </alternativeName>
    <alternativeName>
        <fullName evidence="1">Signal peptidase II</fullName>
        <shortName evidence="1">SPase II</shortName>
    </alternativeName>
</protein>
<organism>
    <name type="scientific">Bifidobacterium longum (strain NCC 2705)</name>
    <dbReference type="NCBI Taxonomy" id="206672"/>
    <lineage>
        <taxon>Bacteria</taxon>
        <taxon>Bacillati</taxon>
        <taxon>Actinomycetota</taxon>
        <taxon>Actinomycetes</taxon>
        <taxon>Bifidobacteriales</taxon>
        <taxon>Bifidobacteriaceae</taxon>
        <taxon>Bifidobacterium</taxon>
    </lineage>
</organism>
<keyword id="KW-0064">Aspartyl protease</keyword>
<keyword id="KW-1003">Cell membrane</keyword>
<keyword id="KW-0378">Hydrolase</keyword>
<keyword id="KW-0472">Membrane</keyword>
<keyword id="KW-0645">Protease</keyword>
<keyword id="KW-1185">Reference proteome</keyword>
<keyword id="KW-0812">Transmembrane</keyword>
<keyword id="KW-1133">Transmembrane helix</keyword>
<gene>
    <name evidence="1" type="primary">lspA</name>
    <name type="ordered locus">BL0122</name>
</gene>
<proteinExistence type="inferred from homology"/>
<dbReference type="EC" id="3.4.23.36" evidence="1"/>
<dbReference type="EMBL" id="AE014295">
    <property type="protein sequence ID" value="AAN23987.1"/>
    <property type="status" value="ALT_INIT"/>
    <property type="molecule type" value="Genomic_DNA"/>
</dbReference>
<dbReference type="RefSeq" id="NP_695351.1">
    <property type="nucleotide sequence ID" value="NC_004307.2"/>
</dbReference>
<dbReference type="RefSeq" id="WP_007053323.1">
    <property type="nucleotide sequence ID" value="NC_004307.2"/>
</dbReference>
<dbReference type="SMR" id="Q8G7W3"/>
<dbReference type="STRING" id="206672.BL0122"/>
<dbReference type="EnsemblBacteria" id="AAN23987">
    <property type="protein sequence ID" value="AAN23987"/>
    <property type="gene ID" value="BL0122"/>
</dbReference>
<dbReference type="GeneID" id="69578544"/>
<dbReference type="KEGG" id="blo:BL0122"/>
<dbReference type="PATRIC" id="fig|206672.9.peg.132"/>
<dbReference type="HOGENOM" id="CLU_083252_2_3_11"/>
<dbReference type="OrthoDB" id="4308908at2"/>
<dbReference type="UniPathway" id="UPA00665"/>
<dbReference type="Proteomes" id="UP000000439">
    <property type="component" value="Chromosome"/>
</dbReference>
<dbReference type="GO" id="GO:0005886">
    <property type="term" value="C:plasma membrane"/>
    <property type="evidence" value="ECO:0007669"/>
    <property type="project" value="UniProtKB-SubCell"/>
</dbReference>
<dbReference type="GO" id="GO:0004190">
    <property type="term" value="F:aspartic-type endopeptidase activity"/>
    <property type="evidence" value="ECO:0007669"/>
    <property type="project" value="UniProtKB-UniRule"/>
</dbReference>
<dbReference type="GO" id="GO:0006508">
    <property type="term" value="P:proteolysis"/>
    <property type="evidence" value="ECO:0007669"/>
    <property type="project" value="UniProtKB-KW"/>
</dbReference>
<dbReference type="HAMAP" id="MF_00161">
    <property type="entry name" value="LspA"/>
    <property type="match status" value="1"/>
</dbReference>
<dbReference type="InterPro" id="IPR001872">
    <property type="entry name" value="Peptidase_A8"/>
</dbReference>
<dbReference type="NCBIfam" id="TIGR00077">
    <property type="entry name" value="lspA"/>
    <property type="match status" value="1"/>
</dbReference>
<dbReference type="NCBIfam" id="NF011353">
    <property type="entry name" value="PRK14771.1"/>
    <property type="match status" value="1"/>
</dbReference>
<dbReference type="PANTHER" id="PTHR33695">
    <property type="entry name" value="LIPOPROTEIN SIGNAL PEPTIDASE"/>
    <property type="match status" value="1"/>
</dbReference>
<dbReference type="PANTHER" id="PTHR33695:SF1">
    <property type="entry name" value="LIPOPROTEIN SIGNAL PEPTIDASE"/>
    <property type="match status" value="1"/>
</dbReference>
<dbReference type="Pfam" id="PF01252">
    <property type="entry name" value="Peptidase_A8"/>
    <property type="match status" value="1"/>
</dbReference>
<dbReference type="PRINTS" id="PR00781">
    <property type="entry name" value="LIPOSIGPTASE"/>
</dbReference>
<comment type="function">
    <text evidence="1">This protein specifically catalyzes the removal of signal peptides from prolipoproteins.</text>
</comment>
<comment type="catalytic activity">
    <reaction evidence="1">
        <text>Release of signal peptides from bacterial membrane prolipoproteins. Hydrolyzes -Xaa-Yaa-Zaa-|-(S,diacylglyceryl)Cys-, in which Xaa is hydrophobic (preferably Leu), and Yaa (Ala or Ser) and Zaa (Gly or Ala) have small, neutral side chains.</text>
        <dbReference type="EC" id="3.4.23.36"/>
    </reaction>
</comment>
<comment type="pathway">
    <text evidence="1">Protein modification; lipoprotein biosynthesis (signal peptide cleavage).</text>
</comment>
<comment type="subcellular location">
    <subcellularLocation>
        <location evidence="1">Cell membrane</location>
        <topology evidence="1">Multi-pass membrane protein</topology>
    </subcellularLocation>
</comment>
<comment type="similarity">
    <text evidence="1">Belongs to the peptidase A8 family.</text>
</comment>
<comment type="sequence caution" evidence="2">
    <conflict type="erroneous initiation">
        <sequence resource="EMBL-CDS" id="AAN23987"/>
    </conflict>
</comment>